<evidence type="ECO:0000255" key="1"/>
<evidence type="ECO:0000255" key="2">
    <source>
        <dbReference type="PROSITE-ProRule" id="PRU00544"/>
    </source>
</evidence>
<evidence type="ECO:0000305" key="3"/>
<dbReference type="EMBL" id="AE015928">
    <property type="protein sequence ID" value="AAO77199.1"/>
    <property type="molecule type" value="Genomic_DNA"/>
</dbReference>
<dbReference type="RefSeq" id="NP_811005.1">
    <property type="nucleotide sequence ID" value="NC_004663.1"/>
</dbReference>
<dbReference type="RefSeq" id="WP_008766579.1">
    <property type="nucleotide sequence ID" value="NC_004663.1"/>
</dbReference>
<dbReference type="SMR" id="Q8A5Z4"/>
<dbReference type="FunCoup" id="Q8A5Z4">
    <property type="interactions" value="34"/>
</dbReference>
<dbReference type="STRING" id="226186.BT_2092"/>
<dbReference type="PaxDb" id="226186-BT_2092"/>
<dbReference type="EnsemblBacteria" id="AAO77199">
    <property type="protein sequence ID" value="AAO77199"/>
    <property type="gene ID" value="BT_2092"/>
</dbReference>
<dbReference type="GeneID" id="60928080"/>
<dbReference type="KEGG" id="bth:BT_2092"/>
<dbReference type="PATRIC" id="fig|226186.12.peg.2153"/>
<dbReference type="eggNOG" id="COG0569">
    <property type="taxonomic scope" value="Bacteria"/>
</dbReference>
<dbReference type="eggNOG" id="COG2985">
    <property type="taxonomic scope" value="Bacteria"/>
</dbReference>
<dbReference type="HOGENOM" id="CLU_035023_3_1_10"/>
<dbReference type="InParanoid" id="Q8A5Z4"/>
<dbReference type="OrthoDB" id="9155749at2"/>
<dbReference type="Proteomes" id="UP000001414">
    <property type="component" value="Chromosome"/>
</dbReference>
<dbReference type="GO" id="GO:0005886">
    <property type="term" value="C:plasma membrane"/>
    <property type="evidence" value="ECO:0000318"/>
    <property type="project" value="GO_Central"/>
</dbReference>
<dbReference type="GO" id="GO:0008324">
    <property type="term" value="F:monoatomic cation transmembrane transporter activity"/>
    <property type="evidence" value="ECO:0007669"/>
    <property type="project" value="InterPro"/>
</dbReference>
<dbReference type="GO" id="GO:0006813">
    <property type="term" value="P:potassium ion transport"/>
    <property type="evidence" value="ECO:0007669"/>
    <property type="project" value="InterPro"/>
</dbReference>
<dbReference type="Gene3D" id="3.30.70.1450">
    <property type="entry name" value="Regulator of K+ conductance, C-terminal domain"/>
    <property type="match status" value="2"/>
</dbReference>
<dbReference type="InterPro" id="IPR050144">
    <property type="entry name" value="AAE_transporter"/>
</dbReference>
<dbReference type="InterPro" id="IPR006037">
    <property type="entry name" value="RCK_C"/>
</dbReference>
<dbReference type="InterPro" id="IPR036721">
    <property type="entry name" value="RCK_C_sf"/>
</dbReference>
<dbReference type="InterPro" id="IPR006512">
    <property type="entry name" value="YidE_YbjL"/>
</dbReference>
<dbReference type="NCBIfam" id="NF003007">
    <property type="entry name" value="PRK03818.1"/>
    <property type="match status" value="1"/>
</dbReference>
<dbReference type="NCBIfam" id="TIGR01625">
    <property type="entry name" value="YidE_YbjL_dupl"/>
    <property type="match status" value="2"/>
</dbReference>
<dbReference type="PANTHER" id="PTHR30445">
    <property type="entry name" value="K(+)_H(+) ANTIPORTER SUBUNIT KHTT"/>
    <property type="match status" value="1"/>
</dbReference>
<dbReference type="PANTHER" id="PTHR30445:SF3">
    <property type="entry name" value="TRANSPORT PROTEIN YIDE-RELATED"/>
    <property type="match status" value="1"/>
</dbReference>
<dbReference type="Pfam" id="PF06826">
    <property type="entry name" value="Asp-Al_Ex"/>
    <property type="match status" value="2"/>
</dbReference>
<dbReference type="Pfam" id="PF02080">
    <property type="entry name" value="TrkA_C"/>
    <property type="match status" value="2"/>
</dbReference>
<dbReference type="SUPFAM" id="SSF116726">
    <property type="entry name" value="TrkA C-terminal domain-like"/>
    <property type="match status" value="2"/>
</dbReference>
<dbReference type="PROSITE" id="PS51202">
    <property type="entry name" value="RCK_C"/>
    <property type="match status" value="2"/>
</dbReference>
<proteinExistence type="inferred from homology"/>
<organism>
    <name type="scientific">Bacteroides thetaiotaomicron (strain ATCC 29148 / DSM 2079 / JCM 5827 / CCUG 10774 / NCTC 10582 / VPI-5482 / E50)</name>
    <dbReference type="NCBI Taxonomy" id="226186"/>
    <lineage>
        <taxon>Bacteria</taxon>
        <taxon>Pseudomonadati</taxon>
        <taxon>Bacteroidota</taxon>
        <taxon>Bacteroidia</taxon>
        <taxon>Bacteroidales</taxon>
        <taxon>Bacteroidaceae</taxon>
        <taxon>Bacteroides</taxon>
    </lineage>
</organism>
<sequence>MDWLQSLLWDPSSVAHIVFLYAFVVAAGVYLGKIKIFGVSLGVTFVLFAGILMGHFGFTADTHILHFIREFGLILFVFCIGLQVGPSFFSSFKKGGMTLNLLAVGIVVLNIAVALGLYYLWNGRVELPMMVGILYGAVTNTPGLGAANEALNQLSYNGPQIALGYACAYPLGVVGIIGSIIAIRYIFRVNMTKEEESLKTQSGDAHHKPHMMSLEVRNESISGKTLIEIKEFLGRNFVCSRIRHEGHVSIPNHETIFNMGDQLFIVCSEEDAPAITVFIGKEVELDWEKQDLPMVSRRILVTKPEINGKTLGSMHFRSMYGVNVTRVNRSGMDLFADPNLILQVGDRVMVVGQQDAVERVAGVLGNQLKRLDTPNIVTIFVGIFLGILLGSLPIAFPGMPTPLKLGLAGGPLVVAILIGRFGHKLHLVTYTTMSANLMLREIGIVLFLASVGIDAGANFVQTVVEGDGLLYVGCGFLITVIPLLIIGAIARLYYKVNYFTLMGLIAGSNTDPPALAYANQVTSSDAPAVGYSTVYPLSMFLRILTGQMILLAMM</sequence>
<reference key="1">
    <citation type="journal article" date="2003" name="Science">
        <title>A genomic view of the human-Bacteroides thetaiotaomicron symbiosis.</title>
        <authorList>
            <person name="Xu J."/>
            <person name="Bjursell M.K."/>
            <person name="Himrod J."/>
            <person name="Deng S."/>
            <person name="Carmichael L.K."/>
            <person name="Chiang H.C."/>
            <person name="Hooper L.V."/>
            <person name="Gordon J.I."/>
        </authorList>
    </citation>
    <scope>NUCLEOTIDE SEQUENCE [LARGE SCALE GENOMIC DNA]</scope>
    <source>
        <strain>ATCC 29148 / DSM 2079 / JCM 5827 / CCUG 10774 / NCTC 10582 / VPI-5482 / E50</strain>
    </source>
</reference>
<feature type="chain" id="PRO_0000208755" description="Uncharacterized transporter BT_2092">
    <location>
        <begin position="1"/>
        <end position="554"/>
    </location>
</feature>
<feature type="transmembrane region" description="Helical" evidence="1">
    <location>
        <begin position="13"/>
        <end position="31"/>
    </location>
</feature>
<feature type="transmembrane region" description="Helical" evidence="1">
    <location>
        <begin position="36"/>
        <end position="58"/>
    </location>
</feature>
<feature type="transmembrane region" description="Helical" evidence="1">
    <location>
        <begin position="73"/>
        <end position="92"/>
    </location>
</feature>
<feature type="transmembrane region" description="Helical" evidence="1">
    <location>
        <begin position="99"/>
        <end position="121"/>
    </location>
</feature>
<feature type="transmembrane region" description="Helical" evidence="1">
    <location>
        <begin position="161"/>
        <end position="183"/>
    </location>
</feature>
<feature type="transmembrane region" description="Helical" evidence="1">
    <location>
        <begin position="376"/>
        <end position="395"/>
    </location>
</feature>
<feature type="transmembrane region" description="Helical" evidence="1">
    <location>
        <begin position="405"/>
        <end position="422"/>
    </location>
</feature>
<feature type="transmembrane region" description="Helical" evidence="1">
    <location>
        <begin position="442"/>
        <end position="464"/>
    </location>
</feature>
<feature type="transmembrane region" description="Helical" evidence="1">
    <location>
        <begin position="468"/>
        <end position="490"/>
    </location>
</feature>
<feature type="domain" description="RCK C-terminal 1" evidence="2">
    <location>
        <begin position="199"/>
        <end position="281"/>
    </location>
</feature>
<feature type="domain" description="RCK C-terminal 2" evidence="2">
    <location>
        <begin position="282"/>
        <end position="366"/>
    </location>
</feature>
<keyword id="KW-1003">Cell membrane</keyword>
<keyword id="KW-0472">Membrane</keyword>
<keyword id="KW-1185">Reference proteome</keyword>
<keyword id="KW-0677">Repeat</keyword>
<keyword id="KW-0812">Transmembrane</keyword>
<keyword id="KW-1133">Transmembrane helix</keyword>
<keyword id="KW-0813">Transport</keyword>
<accession>Q8A5Z4</accession>
<gene>
    <name type="ordered locus">BT_2092</name>
</gene>
<name>Y2092_BACTN</name>
<comment type="subcellular location">
    <subcellularLocation>
        <location evidence="3">Cell membrane</location>
        <topology evidence="3">Multi-pass membrane protein</topology>
    </subcellularLocation>
</comment>
<comment type="similarity">
    <text evidence="3">Belongs to the AAE transporter (TC 2.A.81) family.</text>
</comment>
<protein>
    <recommendedName>
        <fullName>Uncharacterized transporter BT_2092</fullName>
    </recommendedName>
</protein>